<organism>
    <name type="scientific">Paramagnetospirillum magneticum (strain ATCC 700264 / AMB-1)</name>
    <name type="common">Magnetospirillum magneticum</name>
    <dbReference type="NCBI Taxonomy" id="342108"/>
    <lineage>
        <taxon>Bacteria</taxon>
        <taxon>Pseudomonadati</taxon>
        <taxon>Pseudomonadota</taxon>
        <taxon>Alphaproteobacteria</taxon>
        <taxon>Rhodospirillales</taxon>
        <taxon>Magnetospirillaceae</taxon>
        <taxon>Paramagnetospirillum</taxon>
    </lineage>
</organism>
<reference key="1">
    <citation type="journal article" date="2005" name="DNA Res.">
        <title>Complete genome sequence of the facultative anaerobic magnetotactic bacterium Magnetospirillum sp. strain AMB-1.</title>
        <authorList>
            <person name="Matsunaga T."/>
            <person name="Okamura Y."/>
            <person name="Fukuda Y."/>
            <person name="Wahyudi A.T."/>
            <person name="Murase Y."/>
            <person name="Takeyama H."/>
        </authorList>
    </citation>
    <scope>NUCLEOTIDE SEQUENCE [LARGE SCALE GENOMIC DNA]</scope>
    <source>
        <strain>ATCC 700264 / AMB-1</strain>
    </source>
</reference>
<evidence type="ECO:0000255" key="1">
    <source>
        <dbReference type="HAMAP-Rule" id="MF_01350"/>
    </source>
</evidence>
<protein>
    <recommendedName>
        <fullName evidence="1">NADH-quinone oxidoreductase subunit H</fullName>
        <ecNumber evidence="1">7.1.1.-</ecNumber>
    </recommendedName>
    <alternativeName>
        <fullName evidence="1">NADH dehydrogenase I subunit H</fullName>
    </alternativeName>
    <alternativeName>
        <fullName evidence="1">NDH-1 subunit H</fullName>
    </alternativeName>
</protein>
<proteinExistence type="inferred from homology"/>
<name>NUOH_PARM1</name>
<feature type="chain" id="PRO_0000240084" description="NADH-quinone oxidoreductase subunit H">
    <location>
        <begin position="1"/>
        <end position="341"/>
    </location>
</feature>
<feature type="transmembrane region" description="Helical" evidence="1">
    <location>
        <begin position="16"/>
        <end position="36"/>
    </location>
</feature>
<feature type="transmembrane region" description="Helical" evidence="1">
    <location>
        <begin position="86"/>
        <end position="106"/>
    </location>
</feature>
<feature type="transmembrane region" description="Helical" evidence="1">
    <location>
        <begin position="119"/>
        <end position="139"/>
    </location>
</feature>
<feature type="transmembrane region" description="Helical" evidence="1">
    <location>
        <begin position="165"/>
        <end position="185"/>
    </location>
</feature>
<feature type="transmembrane region" description="Helical" evidence="1">
    <location>
        <begin position="191"/>
        <end position="211"/>
    </location>
</feature>
<feature type="transmembrane region" description="Helical" evidence="1">
    <location>
        <begin position="254"/>
        <end position="274"/>
    </location>
</feature>
<feature type="transmembrane region" description="Helical" evidence="1">
    <location>
        <begin position="276"/>
        <end position="296"/>
    </location>
</feature>
<feature type="transmembrane region" description="Helical" evidence="1">
    <location>
        <begin position="315"/>
        <end position="335"/>
    </location>
</feature>
<keyword id="KW-0997">Cell inner membrane</keyword>
<keyword id="KW-1003">Cell membrane</keyword>
<keyword id="KW-0472">Membrane</keyword>
<keyword id="KW-0520">NAD</keyword>
<keyword id="KW-0874">Quinone</keyword>
<keyword id="KW-1278">Translocase</keyword>
<keyword id="KW-0812">Transmembrane</keyword>
<keyword id="KW-1133">Transmembrane helix</keyword>
<keyword id="KW-0830">Ubiquinone</keyword>
<comment type="function">
    <text evidence="1">NDH-1 shuttles electrons from NADH, via FMN and iron-sulfur (Fe-S) centers, to quinones in the respiratory chain. The immediate electron acceptor for the enzyme in this species is believed to be ubiquinone. Couples the redox reaction to proton translocation (for every two electrons transferred, four hydrogen ions are translocated across the cytoplasmic membrane), and thus conserves the redox energy in a proton gradient. This subunit may bind ubiquinone.</text>
</comment>
<comment type="catalytic activity">
    <reaction evidence="1">
        <text>a quinone + NADH + 5 H(+)(in) = a quinol + NAD(+) + 4 H(+)(out)</text>
        <dbReference type="Rhea" id="RHEA:57888"/>
        <dbReference type="ChEBI" id="CHEBI:15378"/>
        <dbReference type="ChEBI" id="CHEBI:24646"/>
        <dbReference type="ChEBI" id="CHEBI:57540"/>
        <dbReference type="ChEBI" id="CHEBI:57945"/>
        <dbReference type="ChEBI" id="CHEBI:132124"/>
    </reaction>
</comment>
<comment type="subunit">
    <text evidence="1">NDH-1 is composed of 14 different subunits. Subunits NuoA, H, J, K, L, M, N constitute the membrane sector of the complex.</text>
</comment>
<comment type="subcellular location">
    <subcellularLocation>
        <location evidence="1">Cell inner membrane</location>
        <topology evidence="1">Multi-pass membrane protein</topology>
    </subcellularLocation>
</comment>
<comment type="similarity">
    <text evidence="1">Belongs to the complex I subunit 1 family.</text>
</comment>
<sequence length="341" mass="37778">MVDLLTGLLPPFVWRLLIIVLQIVAIVLPLLIAVAYLTYAERKVIGAMQLRKGPNVVGPFGLLQPMADGLKLFVKETVLPTSANRVVFVGAPMLTFFLALVAWAVIPFDKGWVLADINVGVLYLFAISSLGVYGIIMAGWASNSKYAFLGGLRSAAQMVSYEVSIGFILISVLLTVGSLNLSDVVTAQSKMWFIVPHFPLFILFIISGLAETNRAPFDLPEAEAELVAGYNVEYSAMTFALFFLGEYANMLMMGAMTSILFLGGWMAPFGLGWLPIPGLIWFVLKICLVMFVFLWVRATFPRYRYDQLMRLGWKVFLPFSLFWLVLTASVLTAFGWLPNQG</sequence>
<gene>
    <name evidence="1" type="primary">nuoH</name>
    <name type="ordered locus">amb2780</name>
</gene>
<accession>Q2W3J1</accession>
<dbReference type="EC" id="7.1.1.-" evidence="1"/>
<dbReference type="EMBL" id="AP007255">
    <property type="protein sequence ID" value="BAE51584.1"/>
    <property type="molecule type" value="Genomic_DNA"/>
</dbReference>
<dbReference type="RefSeq" id="WP_011385158.1">
    <property type="nucleotide sequence ID" value="NC_007626.1"/>
</dbReference>
<dbReference type="SMR" id="Q2W3J1"/>
<dbReference type="STRING" id="342108.amb2780"/>
<dbReference type="KEGG" id="mag:amb2780"/>
<dbReference type="HOGENOM" id="CLU_015134_0_1_5"/>
<dbReference type="OrthoDB" id="9803734at2"/>
<dbReference type="Proteomes" id="UP000007058">
    <property type="component" value="Chromosome"/>
</dbReference>
<dbReference type="GO" id="GO:0005886">
    <property type="term" value="C:plasma membrane"/>
    <property type="evidence" value="ECO:0007669"/>
    <property type="project" value="UniProtKB-SubCell"/>
</dbReference>
<dbReference type="GO" id="GO:0003954">
    <property type="term" value="F:NADH dehydrogenase activity"/>
    <property type="evidence" value="ECO:0007669"/>
    <property type="project" value="TreeGrafter"/>
</dbReference>
<dbReference type="GO" id="GO:0016655">
    <property type="term" value="F:oxidoreductase activity, acting on NAD(P)H, quinone or similar compound as acceptor"/>
    <property type="evidence" value="ECO:0007669"/>
    <property type="project" value="UniProtKB-UniRule"/>
</dbReference>
<dbReference type="GO" id="GO:0048038">
    <property type="term" value="F:quinone binding"/>
    <property type="evidence" value="ECO:0007669"/>
    <property type="project" value="UniProtKB-KW"/>
</dbReference>
<dbReference type="GO" id="GO:0009060">
    <property type="term" value="P:aerobic respiration"/>
    <property type="evidence" value="ECO:0007669"/>
    <property type="project" value="TreeGrafter"/>
</dbReference>
<dbReference type="HAMAP" id="MF_01350">
    <property type="entry name" value="NDH1_NuoH"/>
    <property type="match status" value="1"/>
</dbReference>
<dbReference type="InterPro" id="IPR001694">
    <property type="entry name" value="NADH_UbQ_OxRdtase_su1/FPO"/>
</dbReference>
<dbReference type="InterPro" id="IPR018086">
    <property type="entry name" value="NADH_UbQ_OxRdtase_su1_CS"/>
</dbReference>
<dbReference type="NCBIfam" id="NF004741">
    <property type="entry name" value="PRK06076.1-2"/>
    <property type="match status" value="1"/>
</dbReference>
<dbReference type="NCBIfam" id="NF004745">
    <property type="entry name" value="PRK06076.1-6"/>
    <property type="match status" value="1"/>
</dbReference>
<dbReference type="PANTHER" id="PTHR11432">
    <property type="entry name" value="NADH DEHYDROGENASE SUBUNIT 1"/>
    <property type="match status" value="1"/>
</dbReference>
<dbReference type="PANTHER" id="PTHR11432:SF3">
    <property type="entry name" value="NADH-UBIQUINONE OXIDOREDUCTASE CHAIN 1"/>
    <property type="match status" value="1"/>
</dbReference>
<dbReference type="Pfam" id="PF00146">
    <property type="entry name" value="NADHdh"/>
    <property type="match status" value="1"/>
</dbReference>
<dbReference type="PROSITE" id="PS00667">
    <property type="entry name" value="COMPLEX1_ND1_1"/>
    <property type="match status" value="1"/>
</dbReference>
<dbReference type="PROSITE" id="PS00668">
    <property type="entry name" value="COMPLEX1_ND1_2"/>
    <property type="match status" value="1"/>
</dbReference>